<proteinExistence type="evidence at protein level"/>
<comment type="function">
    <text evidence="4 5 6">Anti-proliferative protein; the function is mediated by association with deadenylase subunits of the CCR4-NOT complex (PubMed:23236473, PubMed:8632892). Mediates CPEB3-accelerated mRNA deadenylation by binding to CPEB3 and recruiting CNOT7 which leads to target mRNA deadenylation and decay (PubMed:21336257).</text>
</comment>
<comment type="subunit">
    <text evidence="3 4 5 6">Interacts with ERBB2 (PubMed:8632892). Interacts with CNOT7 (PubMed:19276069, PubMed:21336257, PubMed:23236473). Interacts with CPEB3 (via C-terminal RNA-binding region); recruits CNOT7 to CPEB3 to form a ternary complex required for mRNA deadenylation and decay (PubMed:21336257). Interacts with CNOT8 (PubMed:23236473). Interacts with CPEB4 (PubMed:21336257).</text>
</comment>
<comment type="interaction">
    <interactant intactId="EBI-723281">
        <id>P50616</id>
    </interactant>
    <interactant intactId="EBI-1222758">
        <id>A5YKK6</id>
        <label>CNOT1</label>
    </interactant>
    <organismsDiffer>false</organismsDiffer>
    <experiments>6</experiments>
</comment>
<comment type="interaction">
    <interactant intactId="EBI-723281">
        <id>P50616</id>
    </interactant>
    <interactant intactId="EBI-1054261">
        <id>Q9H9A5</id>
        <label>CNOT10</label>
    </interactant>
    <organismsDiffer>false</organismsDiffer>
    <experiments>3</experiments>
</comment>
<comment type="interaction">
    <interactant intactId="EBI-723281">
        <id>P50616</id>
    </interactant>
    <interactant intactId="EBI-743033">
        <id>Q9NZN8</id>
        <label>CNOT2</label>
    </interactant>
    <organismsDiffer>false</organismsDiffer>
    <experiments>3</experiments>
</comment>
<comment type="interaction">
    <interactant intactId="EBI-723281">
        <id>P50616</id>
    </interactant>
    <interactant intactId="EBI-743073">
        <id>O75175</id>
        <label>CNOT3</label>
    </interactant>
    <organismsDiffer>false</organismsDiffer>
    <experiments>5</experiments>
</comment>
<comment type="interaction">
    <interactant intactId="EBI-723281">
        <id>P50616</id>
    </interactant>
    <interactant intactId="EBI-1046635">
        <id>Q96LI5</id>
        <label>CNOT6L</label>
    </interactant>
    <organismsDiffer>false</organismsDiffer>
    <experiments>6</experiments>
</comment>
<comment type="interaction">
    <interactant intactId="EBI-723281">
        <id>P50616</id>
    </interactant>
    <interactant intactId="EBI-2105113">
        <id>Q9UIV1</id>
        <label>CNOT7</label>
    </interactant>
    <organismsDiffer>false</organismsDiffer>
    <experiments>11</experiments>
</comment>
<comment type="interaction">
    <interactant intactId="EBI-723281">
        <id>P50616</id>
    </interactant>
    <interactant intactId="EBI-357079">
        <id>Q92600</id>
        <label>CNOT9</label>
    </interactant>
    <organismsDiffer>false</organismsDiffer>
    <experiments>4</experiments>
</comment>
<comment type="interaction">
    <interactant intactId="EBI-723281">
        <id>P50616</id>
    </interactant>
    <interactant intactId="EBI-8596191">
        <id>Q8NE35</id>
        <label>CPEB3</label>
    </interactant>
    <organismsDiffer>false</organismsDiffer>
    <experiments>7</experiments>
</comment>
<comment type="interaction">
    <interactant intactId="EBI-723281">
        <id>P50616</id>
    </interactant>
    <interactant intactId="EBI-2848203">
        <id>Q17RY0</id>
        <label>CPEB4</label>
    </interactant>
    <organismsDiffer>false</organismsDiffer>
    <experiments>2</experiments>
</comment>
<comment type="interaction">
    <interactant intactId="EBI-723281">
        <id>P50616</id>
    </interactant>
    <interactant intactId="EBI-348399">
        <id>P22607</id>
        <label>FGFR3</label>
    </interactant>
    <organismsDiffer>false</organismsDiffer>
    <experiments>3</experiments>
</comment>
<comment type="interaction">
    <interactant intactId="EBI-723281">
        <id>P50616</id>
    </interactant>
    <interactant intactId="EBI-351506">
        <id>P06396</id>
        <label>GSN</label>
    </interactant>
    <organismsDiffer>false</organismsDiffer>
    <experiments>3</experiments>
</comment>
<comment type="interaction">
    <interactant intactId="EBI-723281">
        <id>P50616</id>
    </interactant>
    <interactant intactId="EBI-81531">
        <id>P11940</id>
        <label>PABPC1</label>
    </interactant>
    <organismsDiffer>false</organismsDiffer>
    <experiments>4</experiments>
</comment>
<comment type="interaction">
    <interactant intactId="EBI-723281">
        <id>P50616</id>
    </interactant>
    <interactant intactId="EBI-2105155">
        <id>Q8IY67</id>
        <label>RAVER1</label>
    </interactant>
    <organismsDiffer>false</organismsDiffer>
    <experiments>3</experiments>
</comment>
<comment type="interaction">
    <interactant intactId="EBI-723281">
        <id>P50616</id>
    </interactant>
    <interactant intactId="EBI-372899">
        <id>Q13148</id>
        <label>TARDBP</label>
    </interactant>
    <organismsDiffer>false</organismsDiffer>
    <experiments>4</experiments>
</comment>
<comment type="interaction">
    <interactant intactId="EBI-723281">
        <id>P50616</id>
    </interactant>
    <interactant intactId="EBI-2104458">
        <id>Q9C0C2</id>
        <label>TNKS1BP1</label>
    </interactant>
    <organismsDiffer>false</organismsDiffer>
    <experiments>4</experiments>
</comment>
<comment type="subcellular location">
    <subcellularLocation>
        <location evidence="1">Cytoplasm</location>
    </subcellularLocation>
    <subcellularLocation>
        <location evidence="1">Nucleus</location>
    </subcellularLocation>
    <text evidence="1">Only a small fraction localizes to the cytoplasm except in late S-phase where more than half of proteins become cytoplasmic.</text>
</comment>
<comment type="tissue specificity">
    <text>Ubiquitous.</text>
</comment>
<comment type="PTM">
    <text>Phosphorylated on Ser and Thr residues.</text>
</comment>
<comment type="similarity">
    <text evidence="7">Belongs to the BTG family.</text>
</comment>
<organism>
    <name type="scientific">Homo sapiens</name>
    <name type="common">Human</name>
    <dbReference type="NCBI Taxonomy" id="9606"/>
    <lineage>
        <taxon>Eukaryota</taxon>
        <taxon>Metazoa</taxon>
        <taxon>Chordata</taxon>
        <taxon>Craniata</taxon>
        <taxon>Vertebrata</taxon>
        <taxon>Euteleostomi</taxon>
        <taxon>Mammalia</taxon>
        <taxon>Eutheria</taxon>
        <taxon>Euarchontoglires</taxon>
        <taxon>Primates</taxon>
        <taxon>Haplorrhini</taxon>
        <taxon>Catarrhini</taxon>
        <taxon>Hominidae</taxon>
        <taxon>Homo</taxon>
    </lineage>
</organism>
<protein>
    <recommendedName>
        <fullName>Protein Tob1</fullName>
    </recommendedName>
    <alternativeName>
        <fullName>Transducer of erbB-2 1</fullName>
    </alternativeName>
</protein>
<keyword id="KW-0002">3D-structure</keyword>
<keyword id="KW-0963">Cytoplasm</keyword>
<keyword id="KW-0539">Nucleus</keyword>
<keyword id="KW-0597">Phosphoprotein</keyword>
<keyword id="KW-1267">Proteomics identification</keyword>
<keyword id="KW-1185">Reference proteome</keyword>
<evidence type="ECO:0000250" key="1"/>
<evidence type="ECO:0000256" key="2">
    <source>
        <dbReference type="SAM" id="MobiDB-lite"/>
    </source>
</evidence>
<evidence type="ECO:0000269" key="3">
    <source>
    </source>
</evidence>
<evidence type="ECO:0000269" key="4">
    <source>
    </source>
</evidence>
<evidence type="ECO:0000269" key="5">
    <source>
    </source>
</evidence>
<evidence type="ECO:0000269" key="6">
    <source>
    </source>
</evidence>
<evidence type="ECO:0000305" key="7"/>
<evidence type="ECO:0007744" key="8">
    <source>
    </source>
</evidence>
<evidence type="ECO:0007829" key="9">
    <source>
        <dbReference type="PDB" id="2Z15"/>
    </source>
</evidence>
<sequence length="345" mass="38155">MQLEIQVALNFIISYLYNKLPRRRVNIFGEELERLLKKKYEGHWYPEKPYKGSGFRCIHIGEKVDPVIEQASKESGLDIDDVRGNLPQDLSVWIDPFEVSYQIGEKGPVKVLYVDDNNENGCELDKEIKNSFNPEAQVFMPISDPASSVSSSPSPPFGHSAAVSPTFMPRSTQPLTFTTATFAATKFGSTKMKNSGRSNKVARTSPINLGLNVNDLLKQKAISSSMHSLYGLGLGSQQQPQQQQQPAQPPPPPPPPQQQQQQKTSALSPNAKEFIFPNMQGQGSSTNGMFPGDSPLNLSPLQYSNAFDVFAAYGGLNEKSFVDGLNFSLNNMQYSNQQFQPVMAN</sequence>
<reference key="1">
    <citation type="journal article" date="1996" name="Oncogene">
        <title>Tob, a novel protein that interacts with p185erbB2, is associated with anti-proliferative activity.</title>
        <authorList>
            <person name="Matsuda S."/>
            <person name="Kawamura-Tsuzuku J."/>
            <person name="Ohsugi M."/>
            <person name="Yoshida M."/>
            <person name="Emi M."/>
            <person name="Nakamura Y."/>
            <person name="Onda M."/>
            <person name="Yoshida Y."/>
            <person name="Nishiyama A."/>
            <person name="Yamamoto T."/>
        </authorList>
    </citation>
    <scope>NUCLEOTIDE SEQUENCE [MRNA]</scope>
    <scope>FUNCTION</scope>
    <scope>INTERACTION WITH ERBB2</scope>
</reference>
<reference key="2">
    <citation type="submission" date="2004-06" db="EMBL/GenBank/DDBJ databases">
        <title>Cloning of human full open reading frames in Gateway(TM) system entry vector (pDONR201).</title>
        <authorList>
            <person name="Ebert L."/>
            <person name="Schick M."/>
            <person name="Neubert P."/>
            <person name="Schatten R."/>
            <person name="Henze S."/>
            <person name="Korn B."/>
        </authorList>
    </citation>
    <scope>NUCLEOTIDE SEQUENCE [LARGE SCALE MRNA]</scope>
</reference>
<reference key="3">
    <citation type="submission" date="2004-10" db="EMBL/GenBank/DDBJ databases">
        <title>Cloning of human full-length CDSs in BD Creator(TM) system donor vector.</title>
        <authorList>
            <person name="Kalnine N."/>
            <person name="Chen X."/>
            <person name="Rolfs A."/>
            <person name="Halleck A."/>
            <person name="Hines L."/>
            <person name="Eisenstein S."/>
            <person name="Koundinya M."/>
            <person name="Raphael J."/>
            <person name="Moreira D."/>
            <person name="Kelley T."/>
            <person name="LaBaer J."/>
            <person name="Lin Y."/>
            <person name="Phelan M."/>
            <person name="Farmer A."/>
        </authorList>
    </citation>
    <scope>NUCLEOTIDE SEQUENCE [LARGE SCALE MRNA]</scope>
</reference>
<reference key="4">
    <citation type="journal article" date="2004" name="Nat. Genet.">
        <title>Complete sequencing and characterization of 21,243 full-length human cDNAs.</title>
        <authorList>
            <person name="Ota T."/>
            <person name="Suzuki Y."/>
            <person name="Nishikawa T."/>
            <person name="Otsuki T."/>
            <person name="Sugiyama T."/>
            <person name="Irie R."/>
            <person name="Wakamatsu A."/>
            <person name="Hayashi K."/>
            <person name="Sato H."/>
            <person name="Nagai K."/>
            <person name="Kimura K."/>
            <person name="Makita H."/>
            <person name="Sekine M."/>
            <person name="Obayashi M."/>
            <person name="Nishi T."/>
            <person name="Shibahara T."/>
            <person name="Tanaka T."/>
            <person name="Ishii S."/>
            <person name="Yamamoto J."/>
            <person name="Saito K."/>
            <person name="Kawai Y."/>
            <person name="Isono Y."/>
            <person name="Nakamura Y."/>
            <person name="Nagahari K."/>
            <person name="Murakami K."/>
            <person name="Yasuda T."/>
            <person name="Iwayanagi T."/>
            <person name="Wagatsuma M."/>
            <person name="Shiratori A."/>
            <person name="Sudo H."/>
            <person name="Hosoiri T."/>
            <person name="Kaku Y."/>
            <person name="Kodaira H."/>
            <person name="Kondo H."/>
            <person name="Sugawara M."/>
            <person name="Takahashi M."/>
            <person name="Kanda K."/>
            <person name="Yokoi T."/>
            <person name="Furuya T."/>
            <person name="Kikkawa E."/>
            <person name="Omura Y."/>
            <person name="Abe K."/>
            <person name="Kamihara K."/>
            <person name="Katsuta N."/>
            <person name="Sato K."/>
            <person name="Tanikawa M."/>
            <person name="Yamazaki M."/>
            <person name="Ninomiya K."/>
            <person name="Ishibashi T."/>
            <person name="Yamashita H."/>
            <person name="Murakawa K."/>
            <person name="Fujimori K."/>
            <person name="Tanai H."/>
            <person name="Kimata M."/>
            <person name="Watanabe M."/>
            <person name="Hiraoka S."/>
            <person name="Chiba Y."/>
            <person name="Ishida S."/>
            <person name="Ono Y."/>
            <person name="Takiguchi S."/>
            <person name="Watanabe S."/>
            <person name="Yosida M."/>
            <person name="Hotuta T."/>
            <person name="Kusano J."/>
            <person name="Kanehori K."/>
            <person name="Takahashi-Fujii A."/>
            <person name="Hara H."/>
            <person name="Tanase T.-O."/>
            <person name="Nomura Y."/>
            <person name="Togiya S."/>
            <person name="Komai F."/>
            <person name="Hara R."/>
            <person name="Takeuchi K."/>
            <person name="Arita M."/>
            <person name="Imose N."/>
            <person name="Musashino K."/>
            <person name="Yuuki H."/>
            <person name="Oshima A."/>
            <person name="Sasaki N."/>
            <person name="Aotsuka S."/>
            <person name="Yoshikawa Y."/>
            <person name="Matsunawa H."/>
            <person name="Ichihara T."/>
            <person name="Shiohata N."/>
            <person name="Sano S."/>
            <person name="Moriya S."/>
            <person name="Momiyama H."/>
            <person name="Satoh N."/>
            <person name="Takami S."/>
            <person name="Terashima Y."/>
            <person name="Suzuki O."/>
            <person name="Nakagawa S."/>
            <person name="Senoh A."/>
            <person name="Mizoguchi H."/>
            <person name="Goto Y."/>
            <person name="Shimizu F."/>
            <person name="Wakebe H."/>
            <person name="Hishigaki H."/>
            <person name="Watanabe T."/>
            <person name="Sugiyama A."/>
            <person name="Takemoto M."/>
            <person name="Kawakami B."/>
            <person name="Yamazaki M."/>
            <person name="Watanabe K."/>
            <person name="Kumagai A."/>
            <person name="Itakura S."/>
            <person name="Fukuzumi Y."/>
            <person name="Fujimori Y."/>
            <person name="Komiyama M."/>
            <person name="Tashiro H."/>
            <person name="Tanigami A."/>
            <person name="Fujiwara T."/>
            <person name="Ono T."/>
            <person name="Yamada K."/>
            <person name="Fujii Y."/>
            <person name="Ozaki K."/>
            <person name="Hirao M."/>
            <person name="Ohmori Y."/>
            <person name="Kawabata A."/>
            <person name="Hikiji T."/>
            <person name="Kobatake N."/>
            <person name="Inagaki H."/>
            <person name="Ikema Y."/>
            <person name="Okamoto S."/>
            <person name="Okitani R."/>
            <person name="Kawakami T."/>
            <person name="Noguchi S."/>
            <person name="Itoh T."/>
            <person name="Shigeta K."/>
            <person name="Senba T."/>
            <person name="Matsumura K."/>
            <person name="Nakajima Y."/>
            <person name="Mizuno T."/>
            <person name="Morinaga M."/>
            <person name="Sasaki M."/>
            <person name="Togashi T."/>
            <person name="Oyama M."/>
            <person name="Hata H."/>
            <person name="Watanabe M."/>
            <person name="Komatsu T."/>
            <person name="Mizushima-Sugano J."/>
            <person name="Satoh T."/>
            <person name="Shirai Y."/>
            <person name="Takahashi Y."/>
            <person name="Nakagawa K."/>
            <person name="Okumura K."/>
            <person name="Nagase T."/>
            <person name="Nomura N."/>
            <person name="Kikuchi H."/>
            <person name="Masuho Y."/>
            <person name="Yamashita R."/>
            <person name="Nakai K."/>
            <person name="Yada T."/>
            <person name="Nakamura Y."/>
            <person name="Ohara O."/>
            <person name="Isogai T."/>
            <person name="Sugano S."/>
        </authorList>
    </citation>
    <scope>NUCLEOTIDE SEQUENCE [LARGE SCALE MRNA]</scope>
    <source>
        <tissue>Caudate nucleus</tissue>
    </source>
</reference>
<reference key="5">
    <citation type="submission" date="2005-09" db="EMBL/GenBank/DDBJ databases">
        <authorList>
            <person name="Mural R.J."/>
            <person name="Istrail S."/>
            <person name="Sutton G.G."/>
            <person name="Florea L."/>
            <person name="Halpern A.L."/>
            <person name="Mobarry C.M."/>
            <person name="Lippert R."/>
            <person name="Walenz B."/>
            <person name="Shatkay H."/>
            <person name="Dew I."/>
            <person name="Miller J.R."/>
            <person name="Flanigan M.J."/>
            <person name="Edwards N.J."/>
            <person name="Bolanos R."/>
            <person name="Fasulo D."/>
            <person name="Halldorsson B.V."/>
            <person name="Hannenhalli S."/>
            <person name="Turner R."/>
            <person name="Yooseph S."/>
            <person name="Lu F."/>
            <person name="Nusskern D.R."/>
            <person name="Shue B.C."/>
            <person name="Zheng X.H."/>
            <person name="Zhong F."/>
            <person name="Delcher A.L."/>
            <person name="Huson D.H."/>
            <person name="Kravitz S.A."/>
            <person name="Mouchard L."/>
            <person name="Reinert K."/>
            <person name="Remington K.A."/>
            <person name="Clark A.G."/>
            <person name="Waterman M.S."/>
            <person name="Eichler E.E."/>
            <person name="Adams M.D."/>
            <person name="Hunkapiller M.W."/>
            <person name="Myers E.W."/>
            <person name="Venter J.C."/>
        </authorList>
    </citation>
    <scope>NUCLEOTIDE SEQUENCE [LARGE SCALE GENOMIC DNA]</scope>
</reference>
<reference key="6">
    <citation type="journal article" date="2004" name="Genome Res.">
        <title>The status, quality, and expansion of the NIH full-length cDNA project: the Mammalian Gene Collection (MGC).</title>
        <authorList>
            <consortium name="The MGC Project Team"/>
        </authorList>
    </citation>
    <scope>NUCLEOTIDE SEQUENCE [LARGE SCALE MRNA]</scope>
    <source>
        <tissue>Brain</tissue>
        <tissue>Prostate</tissue>
        <tissue>Uterus</tissue>
    </source>
</reference>
<reference key="7">
    <citation type="journal article" date="2008" name="Proc. Natl. Acad. Sci. U.S.A.">
        <title>A quantitative atlas of mitotic phosphorylation.</title>
        <authorList>
            <person name="Dephoure N."/>
            <person name="Zhou C."/>
            <person name="Villen J."/>
            <person name="Beausoleil S.A."/>
            <person name="Bakalarski C.E."/>
            <person name="Elledge S.J."/>
            <person name="Gygi S.P."/>
        </authorList>
    </citation>
    <scope>IDENTIFICATION BY MASS SPECTROMETRY [LARGE SCALE ANALYSIS]</scope>
    <source>
        <tissue>Cervix carcinoma</tissue>
    </source>
</reference>
<reference key="8">
    <citation type="journal article" date="2009" name="Sci. Signal.">
        <title>Quantitative phosphoproteomic analysis of T cell receptor signaling reveals system-wide modulation of protein-protein interactions.</title>
        <authorList>
            <person name="Mayya V."/>
            <person name="Lundgren D.H."/>
            <person name="Hwang S.-I."/>
            <person name="Rezaul K."/>
            <person name="Wu L."/>
            <person name="Eng J.K."/>
            <person name="Rodionov V."/>
            <person name="Han D.K."/>
        </authorList>
    </citation>
    <scope>PHOSPHORYLATION [LARGE SCALE ANALYSIS] AT THR-204</scope>
    <scope>IDENTIFICATION BY MASS SPECTROMETRY [LARGE SCALE ANALYSIS]</scope>
    <source>
        <tissue>Leukemic T-cell</tissue>
    </source>
</reference>
<reference key="9">
    <citation type="journal article" date="2010" name="Sci. Signal.">
        <title>Quantitative phosphoproteomics reveals widespread full phosphorylation site occupancy during mitosis.</title>
        <authorList>
            <person name="Olsen J.V."/>
            <person name="Vermeulen M."/>
            <person name="Santamaria A."/>
            <person name="Kumar C."/>
            <person name="Miller M.L."/>
            <person name="Jensen L.J."/>
            <person name="Gnad F."/>
            <person name="Cox J."/>
            <person name="Jensen T.S."/>
            <person name="Nigg E.A."/>
            <person name="Brunak S."/>
            <person name="Mann M."/>
        </authorList>
    </citation>
    <scope>IDENTIFICATION BY MASS SPECTROMETRY [LARGE SCALE ANALYSIS]</scope>
    <source>
        <tissue>Cervix carcinoma</tissue>
    </source>
</reference>
<reference key="10">
    <citation type="journal article" date="2011" name="EMBO J.">
        <title>Anti-proliferative protein Tob negatively regulates CPEB3 target by recruiting Caf1 deadenylase.</title>
        <authorList>
            <person name="Hosoda N."/>
            <person name="Funakoshi Y."/>
            <person name="Hirasawa M."/>
            <person name="Yamagishi R."/>
            <person name="Asano Y."/>
            <person name="Miyagawa R."/>
            <person name="Ogami K."/>
            <person name="Tsujimoto M."/>
            <person name="Hoshino S."/>
        </authorList>
    </citation>
    <scope>FUNCTION</scope>
    <scope>INTERACTION WITH CNOT7; CPEB3 AND CPEB4</scope>
</reference>
<reference key="11">
    <citation type="journal article" date="2012" name="PLoS ONE">
        <title>The anti-proliferative activity of BTG/TOB proteins is mediated via the Caf1a (CNOT7) and Caf1b (CNOT8) deadenylase subunits of the Ccr4-not complex.</title>
        <authorList>
            <person name="Doidge R."/>
            <person name="Mittal S."/>
            <person name="Aslam A."/>
            <person name="Winkler G.S."/>
        </authorList>
    </citation>
    <scope>FUNCTION</scope>
    <scope>INTERACTION WITH CNOT7 AND CNOT8</scope>
    <scope>MUTAGENESIS OF TYR-45; PHE-55; ASP-65; TRP-93 AND ASP-95</scope>
</reference>
<reference key="12">
    <citation type="journal article" date="2013" name="J. Proteome Res.">
        <title>Toward a comprehensive characterization of a human cancer cell phosphoproteome.</title>
        <authorList>
            <person name="Zhou H."/>
            <person name="Di Palma S."/>
            <person name="Preisinger C."/>
            <person name="Peng M."/>
            <person name="Polat A.N."/>
            <person name="Heck A.J."/>
            <person name="Mohammed S."/>
        </authorList>
    </citation>
    <scope>IDENTIFICATION BY MASS SPECTROMETRY [LARGE SCALE ANALYSIS]</scope>
    <source>
        <tissue>Cervix carcinoma</tissue>
        <tissue>Erythroleukemia</tissue>
    </source>
</reference>
<reference key="13">
    <citation type="journal article" date="2009" name="J. Biol. Chem.">
        <title>Structural basis for the antiproliferative activity of the Tob-hCaf1 complex.</title>
        <authorList>
            <person name="Horiuchi M."/>
            <person name="Takeuchi K."/>
            <person name="Noda N."/>
            <person name="Muroya N."/>
            <person name="Suzuki T."/>
            <person name="Nakamura T."/>
            <person name="Kawamura-Tsuzuku J."/>
            <person name="Takahasi K."/>
            <person name="Yamamoto T."/>
            <person name="Inagaki F."/>
        </authorList>
    </citation>
    <scope>X-RAY CRYSTALLOGRAPHY (2.5 ANGSTROMS) OF 1-115 IN COMPLEX WITH CNOT7</scope>
</reference>
<name>TOB1_HUMAN</name>
<dbReference type="EMBL" id="D38305">
    <property type="protein sequence ID" value="BAA07423.1"/>
    <property type="molecule type" value="mRNA"/>
</dbReference>
<dbReference type="EMBL" id="CR536487">
    <property type="protein sequence ID" value="CAG38726.1"/>
    <property type="molecule type" value="mRNA"/>
</dbReference>
<dbReference type="EMBL" id="CR541686">
    <property type="protein sequence ID" value="CAG46487.1"/>
    <property type="molecule type" value="mRNA"/>
</dbReference>
<dbReference type="EMBL" id="BT019380">
    <property type="protein sequence ID" value="AAV38187.1"/>
    <property type="molecule type" value="mRNA"/>
</dbReference>
<dbReference type="EMBL" id="BT019381">
    <property type="protein sequence ID" value="AAV38188.1"/>
    <property type="molecule type" value="mRNA"/>
</dbReference>
<dbReference type="EMBL" id="AK313904">
    <property type="protein sequence ID" value="BAG36627.1"/>
    <property type="molecule type" value="mRNA"/>
</dbReference>
<dbReference type="EMBL" id="CH471109">
    <property type="protein sequence ID" value="EAW94577.1"/>
    <property type="molecule type" value="Genomic_DNA"/>
</dbReference>
<dbReference type="EMBL" id="CH471109">
    <property type="protein sequence ID" value="EAW94578.1"/>
    <property type="molecule type" value="Genomic_DNA"/>
</dbReference>
<dbReference type="EMBL" id="BC031406">
    <property type="protein sequence ID" value="AAH31406.1"/>
    <property type="molecule type" value="mRNA"/>
</dbReference>
<dbReference type="EMBL" id="BC070493">
    <property type="protein sequence ID" value="AAH70493.1"/>
    <property type="molecule type" value="mRNA"/>
</dbReference>
<dbReference type="EMBL" id="BC098415">
    <property type="protein sequence ID" value="AAH98415.1"/>
    <property type="molecule type" value="mRNA"/>
</dbReference>
<dbReference type="CCDS" id="CCDS11576.1"/>
<dbReference type="RefSeq" id="NP_001230806.1">
    <property type="nucleotide sequence ID" value="NM_001243877.2"/>
</dbReference>
<dbReference type="RefSeq" id="NP_001230814.1">
    <property type="nucleotide sequence ID" value="NM_001243885.1"/>
</dbReference>
<dbReference type="RefSeq" id="NP_005740.1">
    <property type="nucleotide sequence ID" value="NM_005749.4"/>
</dbReference>
<dbReference type="PDB" id="2D5R">
    <property type="method" value="X-ray"/>
    <property type="resolution" value="2.50 A"/>
    <property type="chains" value="B=1-115"/>
</dbReference>
<dbReference type="PDB" id="2Z15">
    <property type="method" value="X-ray"/>
    <property type="resolution" value="2.30 A"/>
    <property type="chains" value="A/B/C/D=1-117"/>
</dbReference>
<dbReference type="PDB" id="5CI8">
    <property type="method" value="X-ray"/>
    <property type="resolution" value="2.33 A"/>
    <property type="chains" value="A=1-345"/>
</dbReference>
<dbReference type="PDB" id="5CI9">
    <property type="method" value="X-ray"/>
    <property type="resolution" value="2.30 A"/>
    <property type="chains" value="A=1-345"/>
</dbReference>
<dbReference type="PDBsum" id="2D5R"/>
<dbReference type="PDBsum" id="2Z15"/>
<dbReference type="PDBsum" id="5CI8"/>
<dbReference type="PDBsum" id="5CI9"/>
<dbReference type="SMR" id="P50616"/>
<dbReference type="BioGRID" id="115443">
    <property type="interactions" value="43"/>
</dbReference>
<dbReference type="CORUM" id="P50616"/>
<dbReference type="FunCoup" id="P50616">
    <property type="interactions" value="1144"/>
</dbReference>
<dbReference type="IntAct" id="P50616">
    <property type="interactions" value="41"/>
</dbReference>
<dbReference type="MINT" id="P50616"/>
<dbReference type="STRING" id="9606.ENSP00000427695"/>
<dbReference type="GlyGen" id="P50616">
    <property type="glycosylation" value="2 sites, 1 O-linked glycan (2 sites)"/>
</dbReference>
<dbReference type="iPTMnet" id="P50616"/>
<dbReference type="PhosphoSitePlus" id="P50616"/>
<dbReference type="BioMuta" id="TOB1"/>
<dbReference type="DMDM" id="1729989"/>
<dbReference type="jPOST" id="P50616"/>
<dbReference type="MassIVE" id="P50616"/>
<dbReference type="PaxDb" id="9606-ENSP00000427695"/>
<dbReference type="PeptideAtlas" id="P50616"/>
<dbReference type="ProteomicsDB" id="56259"/>
<dbReference type="Pumba" id="P50616"/>
<dbReference type="Antibodypedia" id="4398">
    <property type="antibodies" value="278 antibodies from 32 providers"/>
</dbReference>
<dbReference type="DNASU" id="10140"/>
<dbReference type="Ensembl" id="ENST00000268957.3">
    <property type="protein sequence ID" value="ENSP00000268957.3"/>
    <property type="gene ID" value="ENSG00000141232.5"/>
</dbReference>
<dbReference type="Ensembl" id="ENST00000499247.3">
    <property type="protein sequence ID" value="ENSP00000427695.1"/>
    <property type="gene ID" value="ENSG00000141232.5"/>
</dbReference>
<dbReference type="GeneID" id="10140"/>
<dbReference type="KEGG" id="hsa:10140"/>
<dbReference type="MANE-Select" id="ENST00000499247.3">
    <property type="protein sequence ID" value="ENSP00000427695.1"/>
    <property type="RefSeq nucleotide sequence ID" value="NM_005749.4"/>
    <property type="RefSeq protein sequence ID" value="NP_005740.1"/>
</dbReference>
<dbReference type="UCSC" id="uc002isw.4">
    <property type="organism name" value="human"/>
</dbReference>
<dbReference type="AGR" id="HGNC:11979"/>
<dbReference type="CTD" id="10140"/>
<dbReference type="DisGeNET" id="10140"/>
<dbReference type="GeneCards" id="TOB1"/>
<dbReference type="HGNC" id="HGNC:11979">
    <property type="gene designation" value="TOB1"/>
</dbReference>
<dbReference type="HPA" id="ENSG00000141232">
    <property type="expression patterns" value="Low tissue specificity"/>
</dbReference>
<dbReference type="MIM" id="605523">
    <property type="type" value="gene"/>
</dbReference>
<dbReference type="neXtProt" id="NX_P50616"/>
<dbReference type="OpenTargets" id="ENSG00000141232"/>
<dbReference type="PharmGKB" id="PA36663"/>
<dbReference type="VEuPathDB" id="HostDB:ENSG00000141232"/>
<dbReference type="eggNOG" id="KOG4006">
    <property type="taxonomic scope" value="Eukaryota"/>
</dbReference>
<dbReference type="GeneTree" id="ENSGT00940000154208"/>
<dbReference type="HOGENOM" id="CLU_034687_0_0_1"/>
<dbReference type="InParanoid" id="P50616"/>
<dbReference type="OMA" id="NNGMFPG"/>
<dbReference type="OrthoDB" id="19928at2759"/>
<dbReference type="PAN-GO" id="P50616">
    <property type="GO annotations" value="4 GO annotations based on evolutionary models"/>
</dbReference>
<dbReference type="PhylomeDB" id="P50616"/>
<dbReference type="TreeFam" id="TF105274"/>
<dbReference type="PathwayCommons" id="P50616"/>
<dbReference type="SignaLink" id="P50616"/>
<dbReference type="SIGNOR" id="P50616"/>
<dbReference type="BioGRID-ORCS" id="10140">
    <property type="hits" value="18 hits in 1160 CRISPR screens"/>
</dbReference>
<dbReference type="ChiTaRS" id="TOB1">
    <property type="organism name" value="human"/>
</dbReference>
<dbReference type="EvolutionaryTrace" id="P50616"/>
<dbReference type="GeneWiki" id="TOB1"/>
<dbReference type="GenomeRNAi" id="10140"/>
<dbReference type="Pharos" id="P50616">
    <property type="development level" value="Tbio"/>
</dbReference>
<dbReference type="PRO" id="PR:P50616"/>
<dbReference type="Proteomes" id="UP000005640">
    <property type="component" value="Chromosome 17"/>
</dbReference>
<dbReference type="RNAct" id="P50616">
    <property type="molecule type" value="protein"/>
</dbReference>
<dbReference type="Bgee" id="ENSG00000141232">
    <property type="expression patterns" value="Expressed in mucosa of paranasal sinus and 206 other cell types or tissues"/>
</dbReference>
<dbReference type="GO" id="GO:0030014">
    <property type="term" value="C:CCR4-NOT complex"/>
    <property type="evidence" value="ECO:0000314"/>
    <property type="project" value="UniProtKB"/>
</dbReference>
<dbReference type="GO" id="GO:0005737">
    <property type="term" value="C:cytoplasm"/>
    <property type="evidence" value="ECO:0000318"/>
    <property type="project" value="GO_Central"/>
</dbReference>
<dbReference type="GO" id="GO:0005634">
    <property type="term" value="C:nucleus"/>
    <property type="evidence" value="ECO:0000318"/>
    <property type="project" value="GO_Central"/>
</dbReference>
<dbReference type="GO" id="GO:0030971">
    <property type="term" value="F:receptor tyrosine kinase binding"/>
    <property type="evidence" value="ECO:0000314"/>
    <property type="project" value="UniProtKB"/>
</dbReference>
<dbReference type="GO" id="GO:0046332">
    <property type="term" value="F:SMAD binding"/>
    <property type="evidence" value="ECO:0007669"/>
    <property type="project" value="Ensembl"/>
</dbReference>
<dbReference type="GO" id="GO:0003714">
    <property type="term" value="F:transcription corepressor activity"/>
    <property type="evidence" value="ECO:0000318"/>
    <property type="project" value="GO_Central"/>
</dbReference>
<dbReference type="GO" id="GO:0030514">
    <property type="term" value="P:negative regulation of BMP signaling pathway"/>
    <property type="evidence" value="ECO:0007669"/>
    <property type="project" value="Ensembl"/>
</dbReference>
<dbReference type="GO" id="GO:0008285">
    <property type="term" value="P:negative regulation of cell population proliferation"/>
    <property type="evidence" value="ECO:0000314"/>
    <property type="project" value="UniProtKB"/>
</dbReference>
<dbReference type="GO" id="GO:0060212">
    <property type="term" value="P:negative regulation of nuclear-transcribed mRNA poly(A) tail shortening"/>
    <property type="evidence" value="ECO:0000314"/>
    <property type="project" value="UniProtKB"/>
</dbReference>
<dbReference type="GO" id="GO:0045668">
    <property type="term" value="P:negative regulation of osteoblast differentiation"/>
    <property type="evidence" value="ECO:0007669"/>
    <property type="project" value="Ensembl"/>
</dbReference>
<dbReference type="GO" id="GO:0017148">
    <property type="term" value="P:negative regulation of translation"/>
    <property type="evidence" value="ECO:0000314"/>
    <property type="project" value="UniProtKB"/>
</dbReference>
<dbReference type="GO" id="GO:1900153">
    <property type="term" value="P:positive regulation of nuclear-transcribed mRNA catabolic process, deadenylation-dependent decay"/>
    <property type="evidence" value="ECO:0000314"/>
    <property type="project" value="UniProtKB"/>
</dbReference>
<dbReference type="GO" id="GO:0060213">
    <property type="term" value="P:positive regulation of nuclear-transcribed mRNA poly(A) tail shortening"/>
    <property type="evidence" value="ECO:0000314"/>
    <property type="project" value="UniProtKB"/>
</dbReference>
<dbReference type="GO" id="GO:0010468">
    <property type="term" value="P:regulation of gene expression"/>
    <property type="evidence" value="ECO:0000318"/>
    <property type="project" value="GO_Central"/>
</dbReference>
<dbReference type="GO" id="GO:0060390">
    <property type="term" value="P:regulation of SMAD protein signal transduction"/>
    <property type="evidence" value="ECO:0007669"/>
    <property type="project" value="Ensembl"/>
</dbReference>
<dbReference type="DisProt" id="DP00794"/>
<dbReference type="FunFam" id="3.90.640.90:FF:000001">
    <property type="entry name" value="TOB1 isoform 1"/>
    <property type="match status" value="1"/>
</dbReference>
<dbReference type="Gene3D" id="3.90.640.90">
    <property type="entry name" value="Anti-proliferative protein, N-terminal domain"/>
    <property type="match status" value="1"/>
</dbReference>
<dbReference type="IDEAL" id="IID00453"/>
<dbReference type="InterPro" id="IPR002087">
    <property type="entry name" value="Anti_prolifrtn"/>
</dbReference>
<dbReference type="InterPro" id="IPR036054">
    <property type="entry name" value="BTG-like_sf"/>
</dbReference>
<dbReference type="InterPro" id="IPR015676">
    <property type="entry name" value="Tob1/2"/>
</dbReference>
<dbReference type="PANTHER" id="PTHR17537:SF6">
    <property type="entry name" value="PROTEIN TOB1"/>
    <property type="match status" value="1"/>
</dbReference>
<dbReference type="PANTHER" id="PTHR17537">
    <property type="entry name" value="TRANSDUCER OF ERBB2 TOB"/>
    <property type="match status" value="1"/>
</dbReference>
<dbReference type="Pfam" id="PF07742">
    <property type="entry name" value="BTG"/>
    <property type="match status" value="1"/>
</dbReference>
<dbReference type="PRINTS" id="PR00310">
    <property type="entry name" value="ANTIPRLFBTG1"/>
</dbReference>
<dbReference type="SMART" id="SM00099">
    <property type="entry name" value="btg1"/>
    <property type="match status" value="1"/>
</dbReference>
<dbReference type="SUPFAM" id="SSF160696">
    <property type="entry name" value="BTG domain-like"/>
    <property type="match status" value="1"/>
</dbReference>
<dbReference type="PROSITE" id="PS00960">
    <property type="entry name" value="BTG_1"/>
    <property type="match status" value="1"/>
</dbReference>
<dbReference type="PROSITE" id="PS01203">
    <property type="entry name" value="BTG_2"/>
    <property type="match status" value="1"/>
</dbReference>
<feature type="chain" id="PRO_0000143812" description="Protein Tob1">
    <location>
        <begin position="1"/>
        <end position="345"/>
    </location>
</feature>
<feature type="region of interest" description="Important for nuclear localization" evidence="1">
    <location>
        <begin position="82"/>
        <end position="92"/>
    </location>
</feature>
<feature type="region of interest" description="Disordered" evidence="2">
    <location>
        <begin position="144"/>
        <end position="171"/>
    </location>
</feature>
<feature type="region of interest" description="Required for interaction with CPEB3" evidence="4">
    <location>
        <begin position="161"/>
        <end position="218"/>
    </location>
</feature>
<feature type="region of interest" description="Disordered" evidence="2">
    <location>
        <begin position="231"/>
        <end position="267"/>
    </location>
</feature>
<feature type="short sequence motif" description="Bipartite nuclear localization signal" evidence="1">
    <location>
        <begin position="22"/>
        <end position="39"/>
    </location>
</feature>
<feature type="short sequence motif" description="Nuclear export signal" evidence="1">
    <location>
        <begin position="226"/>
        <end position="234"/>
    </location>
</feature>
<feature type="compositionally biased region" description="Low complexity" evidence="2">
    <location>
        <begin position="144"/>
        <end position="160"/>
    </location>
</feature>
<feature type="compositionally biased region" description="Low complexity" evidence="2">
    <location>
        <begin position="237"/>
        <end position="246"/>
    </location>
</feature>
<feature type="compositionally biased region" description="Pro residues" evidence="2">
    <location>
        <begin position="247"/>
        <end position="257"/>
    </location>
</feature>
<feature type="modified residue" description="Phosphothreonine" evidence="8">
    <location>
        <position position="204"/>
    </location>
</feature>
<feature type="sequence variant" id="VAR_037840" description="In dbSNP:rs3316.">
    <original>K</original>
    <variation>R</variation>
    <location>
        <position position="319"/>
    </location>
</feature>
<feature type="mutagenesis site" description="Impairs interaction with CNOT7 and CNOT8." evidence="5">
    <original>Y</original>
    <variation>A</variation>
    <location>
        <position position="45"/>
    </location>
</feature>
<feature type="mutagenesis site" description="Impairs interaction with CNOT7 and CNOT8." evidence="5">
    <original>F</original>
    <variation>A</variation>
    <location>
        <position position="55"/>
    </location>
</feature>
<feature type="mutagenesis site" description="Impairs interaction with CNOT7 and CNOT8." evidence="5">
    <original>D</original>
    <variation>A</variation>
    <location>
        <position position="65"/>
    </location>
</feature>
<feature type="mutagenesis site" description="Impairs interaction with CNOT7 and CNOT8." evidence="5">
    <original>W</original>
    <variation>A</variation>
    <location>
        <position position="93"/>
    </location>
</feature>
<feature type="mutagenesis site" description="Impairs interaction with CNOT7 and CNOT8." evidence="5">
    <original>D</original>
    <variation>A</variation>
    <location>
        <position position="95"/>
    </location>
</feature>
<feature type="helix" evidence="9">
    <location>
        <begin position="2"/>
        <end position="13"/>
    </location>
</feature>
<feature type="turn" evidence="9">
    <location>
        <begin position="14"/>
        <end position="19"/>
    </location>
</feature>
<feature type="helix" evidence="9">
    <location>
        <begin position="22"/>
        <end position="40"/>
    </location>
</feature>
<feature type="turn" evidence="9">
    <location>
        <begin position="49"/>
        <end position="52"/>
    </location>
</feature>
<feature type="helix" evidence="9">
    <location>
        <begin position="53"/>
        <end position="56"/>
    </location>
</feature>
<feature type="strand" evidence="9">
    <location>
        <begin position="58"/>
        <end position="64"/>
    </location>
</feature>
<feature type="helix" evidence="9">
    <location>
        <begin position="66"/>
        <end position="73"/>
    </location>
</feature>
<feature type="turn" evidence="9">
    <location>
        <begin position="74"/>
        <end position="76"/>
    </location>
</feature>
<feature type="helix" evidence="9">
    <location>
        <begin position="79"/>
        <end position="85"/>
    </location>
</feature>
<feature type="strand" evidence="9">
    <location>
        <begin position="90"/>
        <end position="95"/>
    </location>
</feature>
<feature type="strand" evidence="9">
    <location>
        <begin position="98"/>
        <end position="104"/>
    </location>
</feature>
<feature type="strand" evidence="9">
    <location>
        <begin position="109"/>
        <end position="114"/>
    </location>
</feature>
<accession>P50616</accession>
<accession>B2R9T0</accession>
<accession>D3DTY3</accession>
<accession>Q4KMQ0</accession>
<gene>
    <name type="primary">TOB1</name>
    <name type="synonym">TOB</name>
    <name type="synonym">TROB1</name>
</gene>